<protein>
    <recommendedName>
        <fullName>Polynucleotide 3'-phosphatase ZDP</fullName>
        <ecNumber>3.1.3.32</ecNumber>
    </recommendedName>
    <alternativeName>
        <fullName>DNA nick sensor protein</fullName>
    </alternativeName>
</protein>
<sequence length="694" mass="77387">MITVAPFVSLRFQFPLYIINRSTLFFRERTQYLVYNTCHILRTTAKTMPVVAEYAKSNRSSCRSCSNKIAVKSLRLGLISKGRGGVDMTRWHHFDCFPTDSESIASVDDIQGLSALEKEDQDALTKLVEQCGKVPAKKPDEKKGKAKKHIMGPKGLTKAATSSKVIADNAKSSRSSCNRCSQTIVSKDLRVGLVTEDSRGFDITRWHHLGCFPIDFHPIDSVEDIGGYSSLEKGDQMELKYLAEVNKKDKTLIDDVQKMDEGDDEAIADNELTEETKKGKHSPVAKLVEQPGEPAKEDEDEESKKPASDEISEQKTKDVKNSPDSSKVISEYAKSSRSTCKKCSQTIAAKELRLGLVTRNFRGFDMKQWHHLGCFPVDSDPIVSVEDIGGFSELQSGDQDALKELVQQCGKQTLVDKMDEDNDDTEAKIKLTEETNKRKHSEVGEMVEEDESLTKAKQQMAKTHKVNMSESTSQVEVEAEITLSASDVKDKYRDANLLPKWKAFETVIFLERDDGLNDSEKIAAFDFDGCLAKTSVKIVGADAWSLMYPSIPEKLQSLHDQGYKLVIFTNESNIDRWKNKRQAAVDSKIGRLNSFIERVKVPIQVFIACGVSSSGGKGGKDDLYRKPKAGMWQLMKKHFNSGIAIDMDKSFYVGDAAGRKMDHSDADIKFAQASGLKFFTPEEYFIPSSTSPGT</sequence>
<feature type="chain" id="PRO_0000419433" description="Polynucleotide 3'-phosphatase ZDP">
    <location>
        <begin position="1"/>
        <end position="694"/>
    </location>
</feature>
<feature type="zinc finger region" description="PARP-type 1" evidence="1">
    <location>
        <begin position="50"/>
        <end position="132"/>
    </location>
</feature>
<feature type="zinc finger region" description="PARP-type 2" evidence="1">
    <location>
        <begin position="165"/>
        <end position="247"/>
    </location>
</feature>
<feature type="zinc finger region" description="PARP-type 3" evidence="1">
    <location>
        <begin position="328"/>
        <end position="410"/>
    </location>
</feature>
<feature type="region of interest" description="Disordered" evidence="2">
    <location>
        <begin position="266"/>
        <end position="331"/>
    </location>
</feature>
<feature type="compositionally biased region" description="Basic and acidic residues" evidence="2">
    <location>
        <begin position="302"/>
        <end position="321"/>
    </location>
</feature>
<feature type="compositionally biased region" description="Polar residues" evidence="2">
    <location>
        <begin position="322"/>
        <end position="331"/>
    </location>
</feature>
<feature type="binding site" evidence="1">
    <location>
        <position position="62"/>
    </location>
    <ligand>
        <name>Zn(2+)</name>
        <dbReference type="ChEBI" id="CHEBI:29105"/>
        <label>1</label>
    </ligand>
</feature>
<feature type="binding site" evidence="1">
    <location>
        <position position="65"/>
    </location>
    <ligand>
        <name>Zn(2+)</name>
        <dbReference type="ChEBI" id="CHEBI:29105"/>
        <label>1</label>
    </ligand>
</feature>
<feature type="binding site" evidence="1">
    <location>
        <position position="93"/>
    </location>
    <ligand>
        <name>Zn(2+)</name>
        <dbReference type="ChEBI" id="CHEBI:29105"/>
        <label>1</label>
    </ligand>
</feature>
<feature type="binding site" evidence="1">
    <location>
        <position position="96"/>
    </location>
    <ligand>
        <name>Zn(2+)</name>
        <dbReference type="ChEBI" id="CHEBI:29105"/>
        <label>1</label>
    </ligand>
</feature>
<feature type="binding site" evidence="1">
    <location>
        <position position="177"/>
    </location>
    <ligand>
        <name>Zn(2+)</name>
        <dbReference type="ChEBI" id="CHEBI:29105"/>
        <label>2</label>
    </ligand>
</feature>
<feature type="binding site" evidence="1">
    <location>
        <position position="180"/>
    </location>
    <ligand>
        <name>Zn(2+)</name>
        <dbReference type="ChEBI" id="CHEBI:29105"/>
        <label>2</label>
    </ligand>
</feature>
<feature type="binding site" evidence="1">
    <location>
        <position position="208"/>
    </location>
    <ligand>
        <name>Zn(2+)</name>
        <dbReference type="ChEBI" id="CHEBI:29105"/>
        <label>2</label>
    </ligand>
</feature>
<feature type="binding site" evidence="1">
    <location>
        <position position="211"/>
    </location>
    <ligand>
        <name>Zn(2+)</name>
        <dbReference type="ChEBI" id="CHEBI:29105"/>
        <label>2</label>
    </ligand>
</feature>
<feature type="binding site" evidence="1">
    <location>
        <position position="340"/>
    </location>
    <ligand>
        <name>Zn(2+)</name>
        <dbReference type="ChEBI" id="CHEBI:29105"/>
        <label>3</label>
    </ligand>
</feature>
<feature type="binding site" evidence="1">
    <location>
        <position position="343"/>
    </location>
    <ligand>
        <name>Zn(2+)</name>
        <dbReference type="ChEBI" id="CHEBI:29105"/>
        <label>3</label>
    </ligand>
</feature>
<feature type="binding site" evidence="1">
    <location>
        <position position="371"/>
    </location>
    <ligand>
        <name>Zn(2+)</name>
        <dbReference type="ChEBI" id="CHEBI:29105"/>
        <label>3</label>
    </ligand>
</feature>
<feature type="binding site" evidence="1">
    <location>
        <position position="374"/>
    </location>
    <ligand>
        <name>Zn(2+)</name>
        <dbReference type="ChEBI" id="CHEBI:29105"/>
        <label>3</label>
    </ligand>
</feature>
<feature type="splice variant" id="VSP_044164" description="In isoform 2." evidence="7">
    <location>
        <begin position="245"/>
        <end position="254"/>
    </location>
</feature>
<feature type="sequence conflict" description="In Ref. 4; AAM69280." evidence="8" ref="4">
    <original>K</original>
    <variation>E</variation>
    <location>
        <position position="660"/>
    </location>
</feature>
<keyword id="KW-0025">Alternative splicing</keyword>
<keyword id="KW-0227">DNA damage</keyword>
<keyword id="KW-0234">DNA repair</keyword>
<keyword id="KW-0238">DNA-binding</keyword>
<keyword id="KW-0378">Hydrolase</keyword>
<keyword id="KW-0479">Metal-binding</keyword>
<keyword id="KW-0539">Nucleus</keyword>
<keyword id="KW-1185">Reference proteome</keyword>
<keyword id="KW-0677">Repeat</keyword>
<keyword id="KW-0804">Transcription</keyword>
<keyword id="KW-0805">Transcription regulation</keyword>
<keyword id="KW-0862">Zinc</keyword>
<keyword id="KW-0863">Zinc-finger</keyword>
<comment type="function">
    <text evidence="3 4">Nick-sensing 3'-phosphoesterase involved in a base excision repair pathway required for active DNA demethylation. The N-terminal DNA-binding domain binds specifically to gap sites and sharply bends the target DNA. Lacks 5'-kinase activity but is capable of 3'-phosphoglycolate end processing. Inactive on 3'-alpha,beta-unsaturated aldehyde (3'-dRP). Protects partially genes from transcriptional silencing by preventing promoter DNA hypermethylation.</text>
</comment>
<comment type="catalytic activity">
    <reaction evidence="3">
        <text>a 3'end (2'-deoxyribonucleotide 3'-phosphate)-DNA + H2O = a 3'-end 2'-deoxyribonucleotide-DNA + phosphate</text>
        <dbReference type="Rhea" id="RHEA:14113"/>
        <dbReference type="Rhea" id="RHEA-COMP:13863"/>
        <dbReference type="Rhea" id="RHEA-COMP:13864"/>
        <dbReference type="ChEBI" id="CHEBI:15377"/>
        <dbReference type="ChEBI" id="CHEBI:43474"/>
        <dbReference type="ChEBI" id="CHEBI:138147"/>
        <dbReference type="ChEBI" id="CHEBI:138148"/>
        <dbReference type="EC" id="3.1.3.32"/>
    </reaction>
</comment>
<comment type="activity regulation">
    <text evidence="3 5">Activated by the presence of DNA (PubMed:11948185). Stimulated by XRCC1 (PubMed:23316050).</text>
</comment>
<comment type="biophysicochemical properties">
    <kinetics>
        <KM evidence="3">22 uM for single-stranded oligonucleotide</KM>
        <KM evidence="3">35 uM for double-stranded oligonucleotide</KM>
        <Vmax evidence="3">35.0 pmol/min/pmol enzyme with single-stranded oligonucleotide as substrate</Vmax>
        <Vmax evidence="3">46.0 pmol/min/pmol enzyme with double-stranded oligonucleotide as substrate</Vmax>
    </kinetics>
</comment>
<comment type="subunit">
    <text evidence="4 5">Interacts with ROS1 (via the central region) (PubMed:22325353). Binds to XRCC1 (PubMed:23316050).</text>
</comment>
<comment type="subcellular location">
    <subcellularLocation>
        <location evidence="4">Nucleus</location>
        <location evidence="4">Nucleoplasm</location>
    </subcellularLocation>
    <text evidence="4 6">Not found in the nucleolus (PubMed:22325353). Co-localizes in nucleoplasmic foci with APE1L and ROS1, two components of the DNA demethylase machinery (PubMed:25569774).</text>
</comment>
<comment type="alternative products">
    <event type="alternative splicing"/>
    <isoform>
        <id>Q84JE8-1</id>
        <name>1</name>
        <sequence type="displayed"/>
    </isoform>
    <isoform>
        <id>Q84JE8-2</id>
        <name>2</name>
        <sequence type="described" ref="VSP_044164"/>
    </isoform>
</comment>
<comment type="disruption phenotype">
    <text evidence="4 6">No visible phenotype under normal growth conditions (PubMed:22325353, PubMed:25569774). Loss of 3'-phosphatase activity and hypersensitivity to DNA-damaging agents (PubMed:22325353). Increased DNA methylation and transcriptional gene silencing (PubMed:22325353). Zdp ape1l double mutants are embryo lethal and cause DNA hypermethylation and down-regulation of imprinted genes in the endosperm (PubMed:25569774).</text>
</comment>
<comment type="similarity">
    <text evidence="8">In the C-terminal section; belongs to the DNA 3' phosphatase family.</text>
</comment>
<comment type="sequence caution" evidence="8">
    <conflict type="erroneous gene model prediction">
        <sequence resource="EMBL-CDS" id="BAA97052"/>
    </conflict>
</comment>
<proteinExistence type="evidence at protein level"/>
<accession>Q84JE8</accession>
<accession>F4IXD6</accession>
<accession>Q8LL89</accession>
<accession>Q9LKB5</accession>
<dbReference type="EC" id="3.1.3.32"/>
<dbReference type="EMBL" id="AP000370">
    <property type="protein sequence ID" value="BAA97052.1"/>
    <property type="status" value="ALT_SEQ"/>
    <property type="molecule type" value="Genomic_DNA"/>
</dbReference>
<dbReference type="EMBL" id="CP002686">
    <property type="protein sequence ID" value="AEE75584.1"/>
    <property type="molecule type" value="Genomic_DNA"/>
</dbReference>
<dbReference type="EMBL" id="CP002686">
    <property type="protein sequence ID" value="AEE75585.1"/>
    <property type="molecule type" value="Genomic_DNA"/>
</dbReference>
<dbReference type="EMBL" id="BT003865">
    <property type="protein sequence ID" value="AAO41914.1"/>
    <property type="molecule type" value="mRNA"/>
</dbReference>
<dbReference type="EMBL" id="BT005159">
    <property type="protein sequence ID" value="AAO50692.1"/>
    <property type="molecule type" value="mRNA"/>
</dbReference>
<dbReference type="EMBL" id="AF453835">
    <property type="protein sequence ID" value="AAM69280.2"/>
    <property type="molecule type" value="mRNA"/>
</dbReference>
<dbReference type="RefSeq" id="NP_188107.3">
    <molecule id="Q84JE8-1"/>
    <property type="nucleotide sequence ID" value="NM_112351.4"/>
</dbReference>
<dbReference type="RefSeq" id="NP_850586.2">
    <molecule id="Q84JE8-2"/>
    <property type="nucleotide sequence ID" value="NM_180255.3"/>
</dbReference>
<dbReference type="SMR" id="Q84JE8"/>
<dbReference type="BioGRID" id="6052">
    <property type="interactions" value="2"/>
</dbReference>
<dbReference type="FunCoup" id="Q84JE8">
    <property type="interactions" value="416"/>
</dbReference>
<dbReference type="STRING" id="3702.Q84JE8"/>
<dbReference type="iPTMnet" id="Q84JE8"/>
<dbReference type="PaxDb" id="3702-AT3G14890.1"/>
<dbReference type="ProteomicsDB" id="232325">
    <molecule id="Q84JE8-1"/>
</dbReference>
<dbReference type="EnsemblPlants" id="AT3G14890.1">
    <molecule id="Q84JE8-1"/>
    <property type="protein sequence ID" value="AT3G14890.1"/>
    <property type="gene ID" value="AT3G14890"/>
</dbReference>
<dbReference type="EnsemblPlants" id="AT3G14890.2">
    <molecule id="Q84JE8-2"/>
    <property type="protein sequence ID" value="AT3G14890.2"/>
    <property type="gene ID" value="AT3G14890"/>
</dbReference>
<dbReference type="GeneID" id="820718"/>
<dbReference type="Gramene" id="AT3G14890.1">
    <molecule id="Q84JE8-1"/>
    <property type="protein sequence ID" value="AT3G14890.1"/>
    <property type="gene ID" value="AT3G14890"/>
</dbReference>
<dbReference type="Gramene" id="AT3G14890.2">
    <molecule id="Q84JE8-2"/>
    <property type="protein sequence ID" value="AT3G14890.2"/>
    <property type="gene ID" value="AT3G14890"/>
</dbReference>
<dbReference type="KEGG" id="ath:AT3G14890"/>
<dbReference type="Araport" id="AT3G14890"/>
<dbReference type="TAIR" id="AT3G14890">
    <property type="gene designation" value="ZDP"/>
</dbReference>
<dbReference type="eggNOG" id="KOG1037">
    <property type="taxonomic scope" value="Eukaryota"/>
</dbReference>
<dbReference type="eggNOG" id="KOG2134">
    <property type="taxonomic scope" value="Eukaryota"/>
</dbReference>
<dbReference type="InParanoid" id="Q84JE8"/>
<dbReference type="OMA" id="PKTGMWN"/>
<dbReference type="PhylomeDB" id="Q84JE8"/>
<dbReference type="BioCyc" id="ARA:AT3G14890-MONOMER"/>
<dbReference type="BRENDA" id="3.1.3.32">
    <property type="organism ID" value="399"/>
</dbReference>
<dbReference type="BRENDA" id="3.1.3.7">
    <property type="organism ID" value="399"/>
</dbReference>
<dbReference type="PRO" id="PR:Q84JE8"/>
<dbReference type="Proteomes" id="UP000006548">
    <property type="component" value="Chromosome 3"/>
</dbReference>
<dbReference type="ExpressionAtlas" id="Q84JE8">
    <property type="expression patterns" value="baseline and differential"/>
</dbReference>
<dbReference type="GO" id="GO:0005654">
    <property type="term" value="C:nucleoplasm"/>
    <property type="evidence" value="ECO:0007669"/>
    <property type="project" value="UniProtKB-SubCell"/>
</dbReference>
<dbReference type="GO" id="GO:0003677">
    <property type="term" value="F:DNA binding"/>
    <property type="evidence" value="ECO:0007669"/>
    <property type="project" value="UniProtKB-KW"/>
</dbReference>
<dbReference type="GO" id="GO:0046403">
    <property type="term" value="F:polynucleotide 3'-phosphatase activity"/>
    <property type="evidence" value="ECO:0007669"/>
    <property type="project" value="UniProtKB-EC"/>
</dbReference>
<dbReference type="GO" id="GO:0008270">
    <property type="term" value="F:zinc ion binding"/>
    <property type="evidence" value="ECO:0007669"/>
    <property type="project" value="UniProtKB-KW"/>
</dbReference>
<dbReference type="GO" id="GO:0006281">
    <property type="term" value="P:DNA repair"/>
    <property type="evidence" value="ECO:0000316"/>
    <property type="project" value="TAIR"/>
</dbReference>
<dbReference type="CDD" id="cd01625">
    <property type="entry name" value="HAD_PNP"/>
    <property type="match status" value="1"/>
</dbReference>
<dbReference type="FunFam" id="3.40.50.1000:FF:000198">
    <property type="entry name" value="Bifunctional polynucleotide phosphatase/kinase"/>
    <property type="match status" value="1"/>
</dbReference>
<dbReference type="FunFam" id="3.30.1740.10:FF:000006">
    <property type="entry name" value="Poly [ADP-ribose] polymerase"/>
    <property type="match status" value="3"/>
</dbReference>
<dbReference type="Gene3D" id="3.40.50.1000">
    <property type="entry name" value="HAD superfamily/HAD-like"/>
    <property type="match status" value="1"/>
</dbReference>
<dbReference type="Gene3D" id="3.30.1740.10">
    <property type="entry name" value="Zinc finger, PARP-type"/>
    <property type="match status" value="3"/>
</dbReference>
<dbReference type="InterPro" id="IPR036412">
    <property type="entry name" value="HAD-like_sf"/>
</dbReference>
<dbReference type="InterPro" id="IPR006549">
    <property type="entry name" value="HAD-SF_hydro_IIIA"/>
</dbReference>
<dbReference type="InterPro" id="IPR023214">
    <property type="entry name" value="HAD_sf"/>
</dbReference>
<dbReference type="InterPro" id="IPR013954">
    <property type="entry name" value="PNK3P"/>
</dbReference>
<dbReference type="InterPro" id="IPR006551">
    <property type="entry name" value="Polynucleotide_phosphatase"/>
</dbReference>
<dbReference type="InterPro" id="IPR001510">
    <property type="entry name" value="Znf_PARP"/>
</dbReference>
<dbReference type="InterPro" id="IPR036957">
    <property type="entry name" value="Znf_PARP_sf"/>
</dbReference>
<dbReference type="NCBIfam" id="TIGR01664">
    <property type="entry name" value="DNA-3'-Pase"/>
    <property type="match status" value="1"/>
</dbReference>
<dbReference type="NCBIfam" id="TIGR01662">
    <property type="entry name" value="HAD-SF-IIIA"/>
    <property type="match status" value="1"/>
</dbReference>
<dbReference type="PANTHER" id="PTHR12083">
    <property type="entry name" value="BIFUNCTIONAL POLYNUCLEOTIDE PHOSPHATASE/KINASE"/>
    <property type="match status" value="1"/>
</dbReference>
<dbReference type="PANTHER" id="PTHR12083:SF9">
    <property type="entry name" value="BIFUNCTIONAL POLYNUCLEOTIDE PHOSPHATASE_KINASE"/>
    <property type="match status" value="1"/>
</dbReference>
<dbReference type="Pfam" id="PF08645">
    <property type="entry name" value="PNK3P"/>
    <property type="match status" value="1"/>
</dbReference>
<dbReference type="Pfam" id="PF00645">
    <property type="entry name" value="zf-PARP"/>
    <property type="match status" value="3"/>
</dbReference>
<dbReference type="SMART" id="SM01336">
    <property type="entry name" value="zf-PARP"/>
    <property type="match status" value="3"/>
</dbReference>
<dbReference type="SUPFAM" id="SSF57716">
    <property type="entry name" value="Glucocorticoid receptor-like (DNA-binding domain)"/>
    <property type="match status" value="3"/>
</dbReference>
<dbReference type="SUPFAM" id="SSF56784">
    <property type="entry name" value="HAD-like"/>
    <property type="match status" value="1"/>
</dbReference>
<dbReference type="PROSITE" id="PS50064">
    <property type="entry name" value="ZF_PARP_2"/>
    <property type="match status" value="3"/>
</dbReference>
<name>ZDP_ARATH</name>
<gene>
    <name type="primary">ZDP</name>
    <name type="ordered locus">At3g14890</name>
    <name type="ORF">K15M2.3</name>
</gene>
<reference key="1">
    <citation type="journal article" date="2000" name="DNA Res.">
        <title>Structural analysis of Arabidopsis thaliana chromosome 3. II. Sequence features of the 4,251,695 bp regions covered by 90 P1, TAC and BAC clones.</title>
        <authorList>
            <person name="Kaneko T."/>
            <person name="Katoh T."/>
            <person name="Sato S."/>
            <person name="Nakamura Y."/>
            <person name="Asamizu E."/>
            <person name="Tabata S."/>
        </authorList>
    </citation>
    <scope>NUCLEOTIDE SEQUENCE [LARGE SCALE GENOMIC DNA]</scope>
    <source>
        <strain>cv. Columbia</strain>
    </source>
</reference>
<reference key="2">
    <citation type="journal article" date="2017" name="Plant J.">
        <title>Araport11: a complete reannotation of the Arabidopsis thaliana reference genome.</title>
        <authorList>
            <person name="Cheng C.Y."/>
            <person name="Krishnakumar V."/>
            <person name="Chan A.P."/>
            <person name="Thibaud-Nissen F."/>
            <person name="Schobel S."/>
            <person name="Town C.D."/>
        </authorList>
    </citation>
    <scope>GENOME REANNOTATION</scope>
    <source>
        <strain>cv. Columbia</strain>
    </source>
</reference>
<reference key="3">
    <citation type="journal article" date="2003" name="Science">
        <title>Empirical analysis of transcriptional activity in the Arabidopsis genome.</title>
        <authorList>
            <person name="Yamada K."/>
            <person name="Lim J."/>
            <person name="Dale J.M."/>
            <person name="Chen H."/>
            <person name="Shinn P."/>
            <person name="Palm C.J."/>
            <person name="Southwick A.M."/>
            <person name="Wu H.C."/>
            <person name="Kim C.J."/>
            <person name="Nguyen M."/>
            <person name="Pham P.K."/>
            <person name="Cheuk R.F."/>
            <person name="Karlin-Newmann G."/>
            <person name="Liu S.X."/>
            <person name="Lam B."/>
            <person name="Sakano H."/>
            <person name="Wu T."/>
            <person name="Yu G."/>
            <person name="Miranda M."/>
            <person name="Quach H.L."/>
            <person name="Tripp M."/>
            <person name="Chang C.H."/>
            <person name="Lee J.M."/>
            <person name="Toriumi M.J."/>
            <person name="Chan M.M."/>
            <person name="Tang C.C."/>
            <person name="Onodera C.S."/>
            <person name="Deng J.M."/>
            <person name="Akiyama K."/>
            <person name="Ansari Y."/>
            <person name="Arakawa T."/>
            <person name="Banh J."/>
            <person name="Banno F."/>
            <person name="Bowser L."/>
            <person name="Brooks S.Y."/>
            <person name="Carninci P."/>
            <person name="Chao Q."/>
            <person name="Choy N."/>
            <person name="Enju A."/>
            <person name="Goldsmith A.D."/>
            <person name="Gurjal M."/>
            <person name="Hansen N.F."/>
            <person name="Hayashizaki Y."/>
            <person name="Johnson-Hopson C."/>
            <person name="Hsuan V.W."/>
            <person name="Iida K."/>
            <person name="Karnes M."/>
            <person name="Khan S."/>
            <person name="Koesema E."/>
            <person name="Ishida J."/>
            <person name="Jiang P.X."/>
            <person name="Jones T."/>
            <person name="Kawai J."/>
            <person name="Kamiya A."/>
            <person name="Meyers C."/>
            <person name="Nakajima M."/>
            <person name="Narusaka M."/>
            <person name="Seki M."/>
            <person name="Sakurai T."/>
            <person name="Satou M."/>
            <person name="Tamse R."/>
            <person name="Vaysberg M."/>
            <person name="Wallender E.K."/>
            <person name="Wong C."/>
            <person name="Yamamura Y."/>
            <person name="Yuan S."/>
            <person name="Shinozaki K."/>
            <person name="Davis R.W."/>
            <person name="Theologis A."/>
            <person name="Ecker J.R."/>
        </authorList>
    </citation>
    <scope>NUCLEOTIDE SEQUENCE [LARGE SCALE MRNA] (ISOFORM 1)</scope>
    <source>
        <strain>cv. Columbia</strain>
    </source>
</reference>
<reference key="4">
    <citation type="journal article" date="2002" name="J. Biol. Chem.">
        <title>A nick-sensing DNA 3'-repair enzyme from Arabidopsis.</title>
        <authorList>
            <person name="Petrucco S."/>
            <person name="Volpi G."/>
            <person name="Bolchi A."/>
            <person name="Rivetti C."/>
            <person name="Ottonello S."/>
        </authorList>
    </citation>
    <scope>NUCLEOTIDE SEQUENCE [MRNA] OF 48-684 (ISOFORM 2)</scope>
    <scope>FUNCTION</scope>
    <scope>CATALYTIC ACTIVITY</scope>
    <scope>BIOPHYSICOCHEMICAL PROPERTIES</scope>
    <scope>ACTIVITY REGULATION</scope>
    <scope>DNA-BINDING</scope>
    <source>
        <strain>cv. Columbia</strain>
    </source>
</reference>
<reference key="5">
    <citation type="submission" date="2006-04" db="EMBL/GenBank/DDBJ databases">
        <authorList>
            <person name="Petrucco S."/>
            <person name="Bolchi A."/>
            <person name="Volpi G."/>
        </authorList>
    </citation>
    <scope>SEQUENCE REVISION</scope>
</reference>
<reference key="6">
    <citation type="journal article" date="2012" name="Mol. Cell">
        <title>A DNA 3' phosphatase functions in active DNA demethylation in Arabidopsis.</title>
        <authorList>
            <person name="Martinez-Macias M.I."/>
            <person name="Qian W."/>
            <person name="Miki D."/>
            <person name="Pontes O."/>
            <person name="Liu Y."/>
            <person name="Tang K."/>
            <person name="Liu R."/>
            <person name="Morales-Ruiz T."/>
            <person name="Ariza R.R."/>
            <person name="Roldan-Arjona T."/>
            <person name="Zhu J.K."/>
        </authorList>
    </citation>
    <scope>FUNCTION</scope>
    <scope>INTERACTION WITH ROS1</scope>
    <scope>SUBCELLULAR LOCATION</scope>
    <scope>DISRUPTION PHENOTYPE</scope>
</reference>
<reference key="7">
    <citation type="journal article" date="2013" name="J. Biol. Chem.">
        <title>The DNA repair protein XRCC1 functions in the plant DNA demethylation pathway by stimulating cytosine methylation (5-meC) excision, gap tailoring, and DNA ligation.</title>
        <authorList>
            <person name="Martinez-Macias M.I."/>
            <person name="Cordoba-Canero D."/>
            <person name="Ariza R.R."/>
            <person name="Roldan-Arjona T."/>
        </authorList>
    </citation>
    <scope>INTERACTION WITH XRCC1</scope>
    <scope>ACTIVITY REGULATION</scope>
</reference>
<reference key="8">
    <citation type="journal article" date="2015" name="PLoS Genet.">
        <title>An AP endonuclease functions in active DNA dimethylation and gene imprinting in Arabidopsis.</title>
        <authorList>
            <person name="Li Y."/>
            <person name="Cordoba-Canero D."/>
            <person name="Qian W."/>
            <person name="Zhu X."/>
            <person name="Tang K."/>
            <person name="Zhang H."/>
            <person name="Ariza R.R."/>
            <person name="Roldan-Arjona T."/>
            <person name="Zhu J.K."/>
        </authorList>
    </citation>
    <scope>SUBCELLULAR LOCATION</scope>
    <scope>DISRUPTION PHENOTYPE</scope>
</reference>
<evidence type="ECO:0000255" key="1">
    <source>
        <dbReference type="PROSITE-ProRule" id="PRU00264"/>
    </source>
</evidence>
<evidence type="ECO:0000256" key="2">
    <source>
        <dbReference type="SAM" id="MobiDB-lite"/>
    </source>
</evidence>
<evidence type="ECO:0000269" key="3">
    <source>
    </source>
</evidence>
<evidence type="ECO:0000269" key="4">
    <source>
    </source>
</evidence>
<evidence type="ECO:0000269" key="5">
    <source>
    </source>
</evidence>
<evidence type="ECO:0000269" key="6">
    <source>
    </source>
</evidence>
<evidence type="ECO:0000303" key="7">
    <source>
    </source>
</evidence>
<evidence type="ECO:0000305" key="8"/>
<organism>
    <name type="scientific">Arabidopsis thaliana</name>
    <name type="common">Mouse-ear cress</name>
    <dbReference type="NCBI Taxonomy" id="3702"/>
    <lineage>
        <taxon>Eukaryota</taxon>
        <taxon>Viridiplantae</taxon>
        <taxon>Streptophyta</taxon>
        <taxon>Embryophyta</taxon>
        <taxon>Tracheophyta</taxon>
        <taxon>Spermatophyta</taxon>
        <taxon>Magnoliopsida</taxon>
        <taxon>eudicotyledons</taxon>
        <taxon>Gunneridae</taxon>
        <taxon>Pentapetalae</taxon>
        <taxon>rosids</taxon>
        <taxon>malvids</taxon>
        <taxon>Brassicales</taxon>
        <taxon>Brassicaceae</taxon>
        <taxon>Camelineae</taxon>
        <taxon>Arabidopsis</taxon>
    </lineage>
</organism>